<proteinExistence type="inferred from homology"/>
<reference key="1">
    <citation type="submission" date="2006-06" db="EMBL/GenBank/DDBJ databases">
        <title>Complete sequence of Pseudoalteromonas atlantica T6c.</title>
        <authorList>
            <consortium name="US DOE Joint Genome Institute"/>
            <person name="Copeland A."/>
            <person name="Lucas S."/>
            <person name="Lapidus A."/>
            <person name="Barry K."/>
            <person name="Detter J.C."/>
            <person name="Glavina del Rio T."/>
            <person name="Hammon N."/>
            <person name="Israni S."/>
            <person name="Dalin E."/>
            <person name="Tice H."/>
            <person name="Pitluck S."/>
            <person name="Saunders E."/>
            <person name="Brettin T."/>
            <person name="Bruce D."/>
            <person name="Han C."/>
            <person name="Tapia R."/>
            <person name="Gilna P."/>
            <person name="Schmutz J."/>
            <person name="Larimer F."/>
            <person name="Land M."/>
            <person name="Hauser L."/>
            <person name="Kyrpides N."/>
            <person name="Kim E."/>
            <person name="Karls A.C."/>
            <person name="Bartlett D."/>
            <person name="Higgins B.P."/>
            <person name="Richardson P."/>
        </authorList>
    </citation>
    <scope>NUCLEOTIDE SEQUENCE [LARGE SCALE GENOMIC DNA]</scope>
    <source>
        <strain>T6c / ATCC BAA-1087</strain>
    </source>
</reference>
<name>TGT_PSEA6</name>
<protein>
    <recommendedName>
        <fullName evidence="1">Queuine tRNA-ribosyltransferase</fullName>
        <ecNumber evidence="1">2.4.2.29</ecNumber>
    </recommendedName>
    <alternativeName>
        <fullName evidence="1">Guanine insertion enzyme</fullName>
    </alternativeName>
    <alternativeName>
        <fullName evidence="1">tRNA-guanine transglycosylase</fullName>
    </alternativeName>
</protein>
<accession>Q15WI4</accession>
<dbReference type="EC" id="2.4.2.29" evidence="1"/>
<dbReference type="EMBL" id="CP000388">
    <property type="protein sequence ID" value="ABG39754.1"/>
    <property type="molecule type" value="Genomic_DNA"/>
</dbReference>
<dbReference type="RefSeq" id="WP_011574085.1">
    <property type="nucleotide sequence ID" value="NC_008228.1"/>
</dbReference>
<dbReference type="SMR" id="Q15WI4"/>
<dbReference type="STRING" id="342610.Patl_1228"/>
<dbReference type="KEGG" id="pat:Patl_1228"/>
<dbReference type="eggNOG" id="COG0343">
    <property type="taxonomic scope" value="Bacteria"/>
</dbReference>
<dbReference type="HOGENOM" id="CLU_022060_0_1_6"/>
<dbReference type="OrthoDB" id="9805417at2"/>
<dbReference type="UniPathway" id="UPA00392"/>
<dbReference type="Proteomes" id="UP000001981">
    <property type="component" value="Chromosome"/>
</dbReference>
<dbReference type="GO" id="GO:0005829">
    <property type="term" value="C:cytosol"/>
    <property type="evidence" value="ECO:0007669"/>
    <property type="project" value="TreeGrafter"/>
</dbReference>
<dbReference type="GO" id="GO:0046872">
    <property type="term" value="F:metal ion binding"/>
    <property type="evidence" value="ECO:0007669"/>
    <property type="project" value="UniProtKB-KW"/>
</dbReference>
<dbReference type="GO" id="GO:0008479">
    <property type="term" value="F:tRNA-guanosine(34) queuine transglycosylase activity"/>
    <property type="evidence" value="ECO:0007669"/>
    <property type="project" value="UniProtKB-UniRule"/>
</dbReference>
<dbReference type="GO" id="GO:0008616">
    <property type="term" value="P:queuosine biosynthetic process"/>
    <property type="evidence" value="ECO:0007669"/>
    <property type="project" value="UniProtKB-UniRule"/>
</dbReference>
<dbReference type="GO" id="GO:0002099">
    <property type="term" value="P:tRNA wobble guanine modification"/>
    <property type="evidence" value="ECO:0007669"/>
    <property type="project" value="TreeGrafter"/>
</dbReference>
<dbReference type="GO" id="GO:0101030">
    <property type="term" value="P:tRNA-guanine transglycosylation"/>
    <property type="evidence" value="ECO:0007669"/>
    <property type="project" value="InterPro"/>
</dbReference>
<dbReference type="FunFam" id="3.20.20.105:FF:000001">
    <property type="entry name" value="Queuine tRNA-ribosyltransferase"/>
    <property type="match status" value="1"/>
</dbReference>
<dbReference type="Gene3D" id="3.20.20.105">
    <property type="entry name" value="Queuine tRNA-ribosyltransferase-like"/>
    <property type="match status" value="1"/>
</dbReference>
<dbReference type="HAMAP" id="MF_00168">
    <property type="entry name" value="Q_tRNA_Tgt"/>
    <property type="match status" value="1"/>
</dbReference>
<dbReference type="InterPro" id="IPR050076">
    <property type="entry name" value="ArchSynthase1/Queuine_TRR"/>
</dbReference>
<dbReference type="InterPro" id="IPR004803">
    <property type="entry name" value="TGT"/>
</dbReference>
<dbReference type="InterPro" id="IPR036511">
    <property type="entry name" value="TGT-like_sf"/>
</dbReference>
<dbReference type="InterPro" id="IPR002616">
    <property type="entry name" value="tRNA_ribo_trans-like"/>
</dbReference>
<dbReference type="NCBIfam" id="TIGR00430">
    <property type="entry name" value="Q_tRNA_tgt"/>
    <property type="match status" value="1"/>
</dbReference>
<dbReference type="NCBIfam" id="TIGR00449">
    <property type="entry name" value="tgt_general"/>
    <property type="match status" value="1"/>
</dbReference>
<dbReference type="PANTHER" id="PTHR46499">
    <property type="entry name" value="QUEUINE TRNA-RIBOSYLTRANSFERASE"/>
    <property type="match status" value="1"/>
</dbReference>
<dbReference type="PANTHER" id="PTHR46499:SF1">
    <property type="entry name" value="QUEUINE TRNA-RIBOSYLTRANSFERASE"/>
    <property type="match status" value="1"/>
</dbReference>
<dbReference type="Pfam" id="PF01702">
    <property type="entry name" value="TGT"/>
    <property type="match status" value="1"/>
</dbReference>
<dbReference type="SUPFAM" id="SSF51713">
    <property type="entry name" value="tRNA-guanine transglycosylase"/>
    <property type="match status" value="1"/>
</dbReference>
<gene>
    <name evidence="1" type="primary">tgt</name>
    <name type="ordered locus">Patl_1228</name>
</gene>
<evidence type="ECO:0000255" key="1">
    <source>
        <dbReference type="HAMAP-Rule" id="MF_00168"/>
    </source>
</evidence>
<comment type="function">
    <text evidence="1">Catalyzes the base-exchange of a guanine (G) residue with the queuine precursor 7-aminomethyl-7-deazaguanine (PreQ1) at position 34 (anticodon wobble position) in tRNAs with GU(N) anticodons (tRNA-Asp, -Asn, -His and -Tyr). Catalysis occurs through a double-displacement mechanism. The nucleophile active site attacks the C1' of nucleotide 34 to detach the guanine base from the RNA, forming a covalent enzyme-RNA intermediate. The proton acceptor active site deprotonates the incoming PreQ1, allowing a nucleophilic attack on the C1' of the ribose to form the product. After dissociation, two additional enzymatic reactions on the tRNA convert PreQ1 to queuine (Q), resulting in the hypermodified nucleoside queuosine (7-(((4,5-cis-dihydroxy-2-cyclopenten-1-yl)amino)methyl)-7-deazaguanosine).</text>
</comment>
<comment type="catalytic activity">
    <reaction evidence="1">
        <text>7-aminomethyl-7-carbaguanine + guanosine(34) in tRNA = 7-aminomethyl-7-carbaguanosine(34) in tRNA + guanine</text>
        <dbReference type="Rhea" id="RHEA:24104"/>
        <dbReference type="Rhea" id="RHEA-COMP:10341"/>
        <dbReference type="Rhea" id="RHEA-COMP:10342"/>
        <dbReference type="ChEBI" id="CHEBI:16235"/>
        <dbReference type="ChEBI" id="CHEBI:58703"/>
        <dbReference type="ChEBI" id="CHEBI:74269"/>
        <dbReference type="ChEBI" id="CHEBI:82833"/>
        <dbReference type="EC" id="2.4.2.29"/>
    </reaction>
</comment>
<comment type="cofactor">
    <cofactor evidence="1">
        <name>Zn(2+)</name>
        <dbReference type="ChEBI" id="CHEBI:29105"/>
    </cofactor>
    <text evidence="1">Binds 1 zinc ion per subunit.</text>
</comment>
<comment type="pathway">
    <text evidence="1">tRNA modification; tRNA-queuosine biosynthesis.</text>
</comment>
<comment type="subunit">
    <text evidence="1">Homodimer. Within each dimer, one monomer is responsible for RNA recognition and catalysis, while the other monomer binds to the replacement base PreQ1.</text>
</comment>
<comment type="similarity">
    <text evidence="1">Belongs to the queuine tRNA-ribosyltransferase family.</text>
</comment>
<keyword id="KW-0328">Glycosyltransferase</keyword>
<keyword id="KW-0479">Metal-binding</keyword>
<keyword id="KW-0671">Queuosine biosynthesis</keyword>
<keyword id="KW-0808">Transferase</keyword>
<keyword id="KW-0819">tRNA processing</keyword>
<keyword id="KW-0862">Zinc</keyword>
<organism>
    <name type="scientific">Pseudoalteromonas atlantica (strain T6c / ATCC BAA-1087)</name>
    <dbReference type="NCBI Taxonomy" id="3042615"/>
    <lineage>
        <taxon>Bacteria</taxon>
        <taxon>Pseudomonadati</taxon>
        <taxon>Pseudomonadota</taxon>
        <taxon>Gammaproteobacteria</taxon>
        <taxon>Alteromonadales</taxon>
        <taxon>Alteromonadaceae</taxon>
        <taxon>Paraglaciecola</taxon>
    </lineage>
</organism>
<sequence length="370" mass="41572">MQFELDNTDGKARRGRLKFDRGIVETPAFMPVGTYGTVKGMTPEELDETGAHICLGNTFHLMLRPGTEIIKQHGDLHDFMHWQKPILTDSGGFQVFSLGDLRKITEEGVTFRSPINGEKILLTPEKSMQVQRDLGSDIVMIFDECTPHPATESEARQSMELSLRWAKRSKAEHGDNPSALFGIIQGGMYEGLRDVSLKGLEDIGFDGYAIGGLSVGEPKEDMIRILDHTTDKIPAHKPRYLMGVGKPEDLVEGVRRGVDMFDCVMPTRNARNGHLFVTSGIVKIRNAAHKTDTSPLDDKCDCYTCKNYSRSYLHHLDKCNEILGARLNTIHNLRYYQRVMQGLRDAIAEQKLDEFVADFYAQKDMPVPAL</sequence>
<feature type="chain" id="PRO_1000016827" description="Queuine tRNA-ribosyltransferase">
    <location>
        <begin position="1"/>
        <end position="370"/>
    </location>
</feature>
<feature type="region of interest" description="RNA binding" evidence="1">
    <location>
        <begin position="243"/>
        <end position="249"/>
    </location>
</feature>
<feature type="region of interest" description="RNA binding; important for wobble base 34 recognition" evidence="1">
    <location>
        <begin position="267"/>
        <end position="271"/>
    </location>
</feature>
<feature type="active site" description="Proton acceptor" evidence="1">
    <location>
        <position position="89"/>
    </location>
</feature>
<feature type="active site" description="Nucleophile" evidence="1">
    <location>
        <position position="262"/>
    </location>
</feature>
<feature type="binding site" evidence="1">
    <location>
        <begin position="89"/>
        <end position="93"/>
    </location>
    <ligand>
        <name>substrate</name>
    </ligand>
</feature>
<feature type="binding site" evidence="1">
    <location>
        <position position="143"/>
    </location>
    <ligand>
        <name>substrate</name>
    </ligand>
</feature>
<feature type="binding site" evidence="1">
    <location>
        <position position="185"/>
    </location>
    <ligand>
        <name>substrate</name>
    </ligand>
</feature>
<feature type="binding site" evidence="1">
    <location>
        <position position="212"/>
    </location>
    <ligand>
        <name>substrate</name>
    </ligand>
</feature>
<feature type="binding site" evidence="1">
    <location>
        <position position="300"/>
    </location>
    <ligand>
        <name>Zn(2+)</name>
        <dbReference type="ChEBI" id="CHEBI:29105"/>
    </ligand>
</feature>
<feature type="binding site" evidence="1">
    <location>
        <position position="302"/>
    </location>
    <ligand>
        <name>Zn(2+)</name>
        <dbReference type="ChEBI" id="CHEBI:29105"/>
    </ligand>
</feature>
<feature type="binding site" evidence="1">
    <location>
        <position position="305"/>
    </location>
    <ligand>
        <name>Zn(2+)</name>
        <dbReference type="ChEBI" id="CHEBI:29105"/>
    </ligand>
</feature>
<feature type="binding site" evidence="1">
    <location>
        <position position="331"/>
    </location>
    <ligand>
        <name>Zn(2+)</name>
        <dbReference type="ChEBI" id="CHEBI:29105"/>
    </ligand>
</feature>